<comment type="function">
    <text evidence="1">Catalyzes the attachment of L-aspartate to tRNA(Asp) in a two-step reaction: L-aspartate is first activated by ATP to form Asp-AMP and then transferred to the acceptor end of tRNA(Asp).</text>
</comment>
<comment type="catalytic activity">
    <reaction evidence="1">
        <text>tRNA(Asp) + L-aspartate + ATP = L-aspartyl-tRNA(Asp) + AMP + diphosphate</text>
        <dbReference type="Rhea" id="RHEA:19649"/>
        <dbReference type="Rhea" id="RHEA-COMP:9660"/>
        <dbReference type="Rhea" id="RHEA-COMP:9678"/>
        <dbReference type="ChEBI" id="CHEBI:29991"/>
        <dbReference type="ChEBI" id="CHEBI:30616"/>
        <dbReference type="ChEBI" id="CHEBI:33019"/>
        <dbReference type="ChEBI" id="CHEBI:78442"/>
        <dbReference type="ChEBI" id="CHEBI:78516"/>
        <dbReference type="ChEBI" id="CHEBI:456215"/>
        <dbReference type="EC" id="6.1.1.12"/>
    </reaction>
</comment>
<comment type="subunit">
    <text evidence="1">Homodimer.</text>
</comment>
<comment type="subcellular location">
    <subcellularLocation>
        <location evidence="1">Cytoplasm</location>
    </subcellularLocation>
</comment>
<comment type="similarity">
    <text evidence="1">Belongs to the class-II aminoacyl-tRNA synthetase family. Type 1 subfamily.</text>
</comment>
<accession>B9DNF8</accession>
<keyword id="KW-0030">Aminoacyl-tRNA synthetase</keyword>
<keyword id="KW-0067">ATP-binding</keyword>
<keyword id="KW-0963">Cytoplasm</keyword>
<keyword id="KW-0436">Ligase</keyword>
<keyword id="KW-0547">Nucleotide-binding</keyword>
<keyword id="KW-0648">Protein biosynthesis</keyword>
<keyword id="KW-1185">Reference proteome</keyword>
<organism>
    <name type="scientific">Staphylococcus carnosus (strain TM300)</name>
    <dbReference type="NCBI Taxonomy" id="396513"/>
    <lineage>
        <taxon>Bacteria</taxon>
        <taxon>Bacillati</taxon>
        <taxon>Bacillota</taxon>
        <taxon>Bacilli</taxon>
        <taxon>Bacillales</taxon>
        <taxon>Staphylococcaceae</taxon>
        <taxon>Staphylococcus</taxon>
    </lineage>
</organism>
<feature type="chain" id="PRO_1000199011" description="Aspartate--tRNA ligase">
    <location>
        <begin position="1"/>
        <end position="588"/>
    </location>
</feature>
<feature type="region of interest" description="Aspartate" evidence="1">
    <location>
        <begin position="201"/>
        <end position="204"/>
    </location>
</feature>
<feature type="binding site" evidence="1">
    <location>
        <position position="177"/>
    </location>
    <ligand>
        <name>L-aspartate</name>
        <dbReference type="ChEBI" id="CHEBI:29991"/>
    </ligand>
</feature>
<feature type="binding site" evidence="1">
    <location>
        <begin position="223"/>
        <end position="225"/>
    </location>
    <ligand>
        <name>ATP</name>
        <dbReference type="ChEBI" id="CHEBI:30616"/>
    </ligand>
</feature>
<feature type="binding site" evidence="1">
    <location>
        <position position="223"/>
    </location>
    <ligand>
        <name>L-aspartate</name>
        <dbReference type="ChEBI" id="CHEBI:29991"/>
    </ligand>
</feature>
<feature type="binding site" evidence="1">
    <location>
        <position position="232"/>
    </location>
    <ligand>
        <name>ATP</name>
        <dbReference type="ChEBI" id="CHEBI:30616"/>
    </ligand>
</feature>
<feature type="binding site" evidence="1">
    <location>
        <position position="451"/>
    </location>
    <ligand>
        <name>L-aspartate</name>
        <dbReference type="ChEBI" id="CHEBI:29991"/>
    </ligand>
</feature>
<feature type="binding site" evidence="1">
    <location>
        <position position="485"/>
    </location>
    <ligand>
        <name>ATP</name>
        <dbReference type="ChEBI" id="CHEBI:30616"/>
    </ligand>
</feature>
<feature type="binding site" evidence="1">
    <location>
        <position position="492"/>
    </location>
    <ligand>
        <name>L-aspartate</name>
        <dbReference type="ChEBI" id="CHEBI:29991"/>
    </ligand>
</feature>
<feature type="binding site" evidence="1">
    <location>
        <begin position="537"/>
        <end position="540"/>
    </location>
    <ligand>
        <name>ATP</name>
        <dbReference type="ChEBI" id="CHEBI:30616"/>
    </ligand>
</feature>
<dbReference type="EC" id="6.1.1.12" evidence="1"/>
<dbReference type="EMBL" id="AM295250">
    <property type="protein sequence ID" value="CAL28148.1"/>
    <property type="molecule type" value="Genomic_DNA"/>
</dbReference>
<dbReference type="RefSeq" id="WP_015900488.1">
    <property type="nucleotide sequence ID" value="NC_012121.1"/>
</dbReference>
<dbReference type="SMR" id="B9DNF8"/>
<dbReference type="GeneID" id="93793667"/>
<dbReference type="KEGG" id="sca:SCA_1241"/>
<dbReference type="eggNOG" id="COG0173">
    <property type="taxonomic scope" value="Bacteria"/>
</dbReference>
<dbReference type="HOGENOM" id="CLU_014330_3_2_9"/>
<dbReference type="OrthoDB" id="9802326at2"/>
<dbReference type="BioCyc" id="SCAR396513:SCA_RS06205-MONOMER"/>
<dbReference type="Proteomes" id="UP000000444">
    <property type="component" value="Chromosome"/>
</dbReference>
<dbReference type="GO" id="GO:0005737">
    <property type="term" value="C:cytoplasm"/>
    <property type="evidence" value="ECO:0007669"/>
    <property type="project" value="UniProtKB-SubCell"/>
</dbReference>
<dbReference type="GO" id="GO:0004815">
    <property type="term" value="F:aspartate-tRNA ligase activity"/>
    <property type="evidence" value="ECO:0007669"/>
    <property type="project" value="UniProtKB-UniRule"/>
</dbReference>
<dbReference type="GO" id="GO:0005524">
    <property type="term" value="F:ATP binding"/>
    <property type="evidence" value="ECO:0007669"/>
    <property type="project" value="UniProtKB-UniRule"/>
</dbReference>
<dbReference type="GO" id="GO:0140096">
    <property type="term" value="F:catalytic activity, acting on a protein"/>
    <property type="evidence" value="ECO:0007669"/>
    <property type="project" value="UniProtKB-ARBA"/>
</dbReference>
<dbReference type="GO" id="GO:0003676">
    <property type="term" value="F:nucleic acid binding"/>
    <property type="evidence" value="ECO:0007669"/>
    <property type="project" value="InterPro"/>
</dbReference>
<dbReference type="GO" id="GO:0016740">
    <property type="term" value="F:transferase activity"/>
    <property type="evidence" value="ECO:0007669"/>
    <property type="project" value="UniProtKB-ARBA"/>
</dbReference>
<dbReference type="GO" id="GO:0006422">
    <property type="term" value="P:aspartyl-tRNA aminoacylation"/>
    <property type="evidence" value="ECO:0007669"/>
    <property type="project" value="UniProtKB-UniRule"/>
</dbReference>
<dbReference type="CDD" id="cd00777">
    <property type="entry name" value="AspRS_core"/>
    <property type="match status" value="1"/>
</dbReference>
<dbReference type="CDD" id="cd04317">
    <property type="entry name" value="EcAspRS_like_N"/>
    <property type="match status" value="1"/>
</dbReference>
<dbReference type="Gene3D" id="3.30.930.10">
    <property type="entry name" value="Bira Bifunctional Protein, Domain 2"/>
    <property type="match status" value="1"/>
</dbReference>
<dbReference type="Gene3D" id="3.30.1360.30">
    <property type="entry name" value="GAD-like domain"/>
    <property type="match status" value="1"/>
</dbReference>
<dbReference type="Gene3D" id="2.40.50.140">
    <property type="entry name" value="Nucleic acid-binding proteins"/>
    <property type="match status" value="1"/>
</dbReference>
<dbReference type="HAMAP" id="MF_00044">
    <property type="entry name" value="Asp_tRNA_synth_type1"/>
    <property type="match status" value="1"/>
</dbReference>
<dbReference type="InterPro" id="IPR004364">
    <property type="entry name" value="Aa-tRNA-synt_II"/>
</dbReference>
<dbReference type="InterPro" id="IPR006195">
    <property type="entry name" value="aa-tRNA-synth_II"/>
</dbReference>
<dbReference type="InterPro" id="IPR045864">
    <property type="entry name" value="aa-tRNA-synth_II/BPL/LPL"/>
</dbReference>
<dbReference type="InterPro" id="IPR004524">
    <property type="entry name" value="Asp-tRNA-ligase_1"/>
</dbReference>
<dbReference type="InterPro" id="IPR047089">
    <property type="entry name" value="Asp-tRNA-ligase_1_N"/>
</dbReference>
<dbReference type="InterPro" id="IPR002312">
    <property type="entry name" value="Asp/Asn-tRNA-synth_IIb"/>
</dbReference>
<dbReference type="InterPro" id="IPR047090">
    <property type="entry name" value="AspRS_core"/>
</dbReference>
<dbReference type="InterPro" id="IPR004115">
    <property type="entry name" value="GAD-like_sf"/>
</dbReference>
<dbReference type="InterPro" id="IPR029351">
    <property type="entry name" value="GAD_dom"/>
</dbReference>
<dbReference type="InterPro" id="IPR012340">
    <property type="entry name" value="NA-bd_OB-fold"/>
</dbReference>
<dbReference type="InterPro" id="IPR004365">
    <property type="entry name" value="NA-bd_OB_tRNA"/>
</dbReference>
<dbReference type="NCBIfam" id="TIGR00459">
    <property type="entry name" value="aspS_bact"/>
    <property type="match status" value="1"/>
</dbReference>
<dbReference type="NCBIfam" id="NF001750">
    <property type="entry name" value="PRK00476.1"/>
    <property type="match status" value="1"/>
</dbReference>
<dbReference type="PANTHER" id="PTHR22594:SF5">
    <property type="entry name" value="ASPARTATE--TRNA LIGASE, MITOCHONDRIAL"/>
    <property type="match status" value="1"/>
</dbReference>
<dbReference type="PANTHER" id="PTHR22594">
    <property type="entry name" value="ASPARTYL/LYSYL-TRNA SYNTHETASE"/>
    <property type="match status" value="1"/>
</dbReference>
<dbReference type="Pfam" id="PF02938">
    <property type="entry name" value="GAD"/>
    <property type="match status" value="1"/>
</dbReference>
<dbReference type="Pfam" id="PF00152">
    <property type="entry name" value="tRNA-synt_2"/>
    <property type="match status" value="1"/>
</dbReference>
<dbReference type="Pfam" id="PF01336">
    <property type="entry name" value="tRNA_anti-codon"/>
    <property type="match status" value="1"/>
</dbReference>
<dbReference type="PRINTS" id="PR01042">
    <property type="entry name" value="TRNASYNTHASP"/>
</dbReference>
<dbReference type="SUPFAM" id="SSF55681">
    <property type="entry name" value="Class II aaRS and biotin synthetases"/>
    <property type="match status" value="1"/>
</dbReference>
<dbReference type="SUPFAM" id="SSF55261">
    <property type="entry name" value="GAD domain-like"/>
    <property type="match status" value="1"/>
</dbReference>
<dbReference type="SUPFAM" id="SSF50249">
    <property type="entry name" value="Nucleic acid-binding proteins"/>
    <property type="match status" value="1"/>
</dbReference>
<dbReference type="PROSITE" id="PS50862">
    <property type="entry name" value="AA_TRNA_LIGASE_II"/>
    <property type="match status" value="1"/>
</dbReference>
<proteinExistence type="inferred from homology"/>
<protein>
    <recommendedName>
        <fullName evidence="1">Aspartate--tRNA ligase</fullName>
        <ecNumber evidence="1">6.1.1.12</ecNumber>
    </recommendedName>
    <alternativeName>
        <fullName evidence="1">Aspartyl-tRNA synthetase</fullName>
        <shortName evidence="1">AspRS</shortName>
    </alternativeName>
</protein>
<reference key="1">
    <citation type="journal article" date="2009" name="Appl. Environ. Microbiol.">
        <title>Genome analysis of the meat starter culture bacterium Staphylococcus carnosus TM300.</title>
        <authorList>
            <person name="Rosenstein R."/>
            <person name="Nerz C."/>
            <person name="Biswas L."/>
            <person name="Resch A."/>
            <person name="Raddatz G."/>
            <person name="Schuster S.C."/>
            <person name="Goetz F."/>
        </authorList>
    </citation>
    <scope>NUCLEOTIDE SEQUENCE [LARGE SCALE GENOMIC DNA]</scope>
    <source>
        <strain>TM300</strain>
    </source>
</reference>
<sequence length="588" mass="66846">MSKRTTYCGLVTEDLLGQRVTLKGWVHNRRDLGGLIFVDLRDREGYVQIVFNPDFSKEALEIAESIRSEYVIEVEGTVTKRDPETVNPKIKTGNVEVQVDHINIINKAQTPPFSINDENQQVDENIRLKYRYLDLRRQELAQTIKMRHQITRSVREFLDRDGFFDIETPVLTKSTPEGARDYLVPSRVHEGQFYALPQSPQLFKQLLMISGFDKYYQIVKCFRDEDLRADRQPEFTQVDVEMSFVDQEDVMEMGEALLKKVVKDVKGIDLTEQFPRMTYAEAMSRYGSDKPDTRFEMELKDVSELGRTMDFKVFKDTVEKGGEVKALAAKGAADKYTRKDMDALTEFVNIYGAKGLAWVKVVEDGFSGPIARFFEDKDVEKVKELTGAETGDLVMFVADKPSVVAQSLGALRVKLAHELGLIDNNKLNFLWVTDWPLLEYDEDEKRYVAAHHPFTSPKDEDLDKLDSAPEKAQAKAYDIVLNGYELGGGSIRIHNADIQSKMFEVLGFTKEQAQEQFGFLLDAFKYGAPPHGGIALGLDRFVMLLAGRNNLRDTIAFPKTASAVSLMTQAPSEVSDKQLEELSLRIRH</sequence>
<gene>
    <name evidence="1" type="primary">aspS</name>
    <name type="ordered locus">Sca_1241</name>
</gene>
<name>SYD_STACT</name>
<evidence type="ECO:0000255" key="1">
    <source>
        <dbReference type="HAMAP-Rule" id="MF_00044"/>
    </source>
</evidence>